<evidence type="ECO:0000250" key="1"/>
<evidence type="ECO:0000250" key="2">
    <source>
        <dbReference type="UniProtKB" id="P00730"/>
    </source>
</evidence>
<evidence type="ECO:0000250" key="3">
    <source>
        <dbReference type="UniProtKB" id="P14384"/>
    </source>
</evidence>
<evidence type="ECO:0000255" key="4"/>
<evidence type="ECO:0000255" key="5">
    <source>
        <dbReference type="PROSITE-ProRule" id="PRU01379"/>
    </source>
</evidence>
<evidence type="ECO:0000256" key="6">
    <source>
        <dbReference type="SAM" id="MobiDB-lite"/>
    </source>
</evidence>
<evidence type="ECO:0000269" key="7">
    <source>
    </source>
</evidence>
<evidence type="ECO:0000305" key="8"/>
<gene>
    <name type="primary">Cpn1</name>
</gene>
<dbReference type="EC" id="3.4.17.3"/>
<dbReference type="EMBL" id="AB042599">
    <property type="protein sequence ID" value="BAB18618.1"/>
    <property type="molecule type" value="mRNA"/>
</dbReference>
<dbReference type="EMBL" id="BC088124">
    <property type="protein sequence ID" value="AAH88124.1"/>
    <property type="molecule type" value="mRNA"/>
</dbReference>
<dbReference type="RefSeq" id="NP_445978.1">
    <property type="nucleotide sequence ID" value="NM_053526.2"/>
</dbReference>
<dbReference type="SMR" id="Q9EQV8"/>
<dbReference type="FunCoup" id="Q9EQV8">
    <property type="interactions" value="44"/>
</dbReference>
<dbReference type="STRING" id="10116.ENSRNOP00000018221"/>
<dbReference type="MEROPS" id="M14.004"/>
<dbReference type="GlyCosmos" id="Q9EQV8">
    <property type="glycosylation" value="3 sites, No reported glycans"/>
</dbReference>
<dbReference type="GlyGen" id="Q9EQV8">
    <property type="glycosylation" value="4 sites"/>
</dbReference>
<dbReference type="PhosphoSitePlus" id="Q9EQV8"/>
<dbReference type="PaxDb" id="10116-ENSRNOP00000018221"/>
<dbReference type="Ensembl" id="ENSRNOT00000018221.8">
    <property type="protein sequence ID" value="ENSRNOP00000018221.6"/>
    <property type="gene ID" value="ENSRNOG00000013439.8"/>
</dbReference>
<dbReference type="GeneID" id="365466"/>
<dbReference type="KEGG" id="rno:365466"/>
<dbReference type="AGR" id="RGD:70931"/>
<dbReference type="CTD" id="1369"/>
<dbReference type="RGD" id="70931">
    <property type="gene designation" value="Cpn1"/>
</dbReference>
<dbReference type="eggNOG" id="KOG2649">
    <property type="taxonomic scope" value="Eukaryota"/>
</dbReference>
<dbReference type="GeneTree" id="ENSGT00940000158235"/>
<dbReference type="HOGENOM" id="CLU_006722_1_3_1"/>
<dbReference type="InParanoid" id="Q9EQV8"/>
<dbReference type="OMA" id="CEEYRHG"/>
<dbReference type="OrthoDB" id="10249045at2759"/>
<dbReference type="PhylomeDB" id="Q9EQV8"/>
<dbReference type="Reactome" id="R-RNO-977606">
    <property type="pathway name" value="Regulation of Complement cascade"/>
</dbReference>
<dbReference type="PRO" id="PR:Q9EQV8"/>
<dbReference type="Proteomes" id="UP000002494">
    <property type="component" value="Chromosome 1"/>
</dbReference>
<dbReference type="Bgee" id="ENSRNOG00000013439">
    <property type="expression patterns" value="Expressed in liver and 5 other cell types or tissues"/>
</dbReference>
<dbReference type="GO" id="GO:0005615">
    <property type="term" value="C:extracellular space"/>
    <property type="evidence" value="ECO:0000314"/>
    <property type="project" value="RGD"/>
</dbReference>
<dbReference type="GO" id="GO:0004180">
    <property type="term" value="F:carboxypeptidase activity"/>
    <property type="evidence" value="ECO:0000314"/>
    <property type="project" value="RGD"/>
</dbReference>
<dbReference type="GO" id="GO:0004181">
    <property type="term" value="F:metallocarboxypeptidase activity"/>
    <property type="evidence" value="ECO:0000318"/>
    <property type="project" value="GO_Central"/>
</dbReference>
<dbReference type="GO" id="GO:0008270">
    <property type="term" value="F:zinc ion binding"/>
    <property type="evidence" value="ECO:0007669"/>
    <property type="project" value="InterPro"/>
</dbReference>
<dbReference type="GO" id="GO:0010815">
    <property type="term" value="P:bradykinin catabolic process"/>
    <property type="evidence" value="ECO:0000315"/>
    <property type="project" value="RGD"/>
</dbReference>
<dbReference type="GO" id="GO:0006518">
    <property type="term" value="P:peptide metabolic process"/>
    <property type="evidence" value="ECO:0000318"/>
    <property type="project" value="GO_Central"/>
</dbReference>
<dbReference type="GO" id="GO:0030163">
    <property type="term" value="P:protein catabolic process"/>
    <property type="evidence" value="ECO:0000314"/>
    <property type="project" value="RGD"/>
</dbReference>
<dbReference type="GO" id="GO:0016485">
    <property type="term" value="P:protein processing"/>
    <property type="evidence" value="ECO:0000318"/>
    <property type="project" value="GO_Central"/>
</dbReference>
<dbReference type="GO" id="GO:0051384">
    <property type="term" value="P:response to glucocorticoid"/>
    <property type="evidence" value="ECO:0000314"/>
    <property type="project" value="RGD"/>
</dbReference>
<dbReference type="CDD" id="cd11308">
    <property type="entry name" value="Peptidase_M14NE-CP-C_like"/>
    <property type="match status" value="1"/>
</dbReference>
<dbReference type="FunFam" id="2.60.40.1120:FF:000011">
    <property type="entry name" value="Carboxypeptidase N catalytic chain"/>
    <property type="match status" value="1"/>
</dbReference>
<dbReference type="FunFam" id="3.40.630.10:FF:000013">
    <property type="entry name" value="carboxypeptidase N catalytic chain"/>
    <property type="match status" value="1"/>
</dbReference>
<dbReference type="Gene3D" id="2.60.40.1120">
    <property type="entry name" value="Carboxypeptidase-like, regulatory domain"/>
    <property type="match status" value="1"/>
</dbReference>
<dbReference type="Gene3D" id="3.40.630.10">
    <property type="entry name" value="Zn peptidases"/>
    <property type="match status" value="1"/>
</dbReference>
<dbReference type="InterPro" id="IPR008969">
    <property type="entry name" value="CarboxyPept-like_regulatory"/>
</dbReference>
<dbReference type="InterPro" id="IPR000834">
    <property type="entry name" value="Peptidase_M14"/>
</dbReference>
<dbReference type="InterPro" id="IPR050753">
    <property type="entry name" value="Peptidase_M14_domain"/>
</dbReference>
<dbReference type="PANTHER" id="PTHR11532:SF80">
    <property type="entry name" value="CARBOXYPEPTIDASE N CATALYTIC CHAIN"/>
    <property type="match status" value="1"/>
</dbReference>
<dbReference type="PANTHER" id="PTHR11532">
    <property type="entry name" value="PROTEASE M14 CARBOXYPEPTIDASE"/>
    <property type="match status" value="1"/>
</dbReference>
<dbReference type="Pfam" id="PF13620">
    <property type="entry name" value="CarboxypepD_reg"/>
    <property type="match status" value="1"/>
</dbReference>
<dbReference type="Pfam" id="PF00246">
    <property type="entry name" value="Peptidase_M14"/>
    <property type="match status" value="1"/>
</dbReference>
<dbReference type="PRINTS" id="PR00765">
    <property type="entry name" value="CRBOXYPTASEA"/>
</dbReference>
<dbReference type="SMART" id="SM00631">
    <property type="entry name" value="Zn_pept"/>
    <property type="match status" value="1"/>
</dbReference>
<dbReference type="SUPFAM" id="SSF49464">
    <property type="entry name" value="Carboxypeptidase regulatory domain-like"/>
    <property type="match status" value="1"/>
</dbReference>
<dbReference type="SUPFAM" id="SSF53187">
    <property type="entry name" value="Zn-dependent exopeptidases"/>
    <property type="match status" value="1"/>
</dbReference>
<dbReference type="PROSITE" id="PS00132">
    <property type="entry name" value="CARBOXYPEPT_ZN_1"/>
    <property type="match status" value="1"/>
</dbReference>
<dbReference type="PROSITE" id="PS00133">
    <property type="entry name" value="CARBOXYPEPT_ZN_2"/>
    <property type="match status" value="1"/>
</dbReference>
<dbReference type="PROSITE" id="PS52035">
    <property type="entry name" value="PEPTIDASE_M14"/>
    <property type="match status" value="1"/>
</dbReference>
<organism>
    <name type="scientific">Rattus norvegicus</name>
    <name type="common">Rat</name>
    <dbReference type="NCBI Taxonomy" id="10116"/>
    <lineage>
        <taxon>Eukaryota</taxon>
        <taxon>Metazoa</taxon>
        <taxon>Chordata</taxon>
        <taxon>Craniata</taxon>
        <taxon>Vertebrata</taxon>
        <taxon>Euteleostomi</taxon>
        <taxon>Mammalia</taxon>
        <taxon>Eutheria</taxon>
        <taxon>Euarchontoglires</taxon>
        <taxon>Glires</taxon>
        <taxon>Rodentia</taxon>
        <taxon>Myomorpha</taxon>
        <taxon>Muroidea</taxon>
        <taxon>Muridae</taxon>
        <taxon>Murinae</taxon>
        <taxon>Rattus</taxon>
    </lineage>
</organism>
<comment type="function">
    <text evidence="1">Protects the body from potent vasoactive and inflammatory peptides containing C-terminal Arg or Lys (such as kinins or anaphylatoxins) which are released into the circulation.</text>
</comment>
<comment type="catalytic activity">
    <reaction>
        <text>Release of a C-terminal basic amino acid, preferentially lysine.</text>
        <dbReference type="EC" id="3.4.17.3"/>
    </reaction>
</comment>
<comment type="cofactor">
    <cofactor evidence="2">
        <name>Zn(2+)</name>
        <dbReference type="ChEBI" id="CHEBI:29105"/>
    </cofactor>
    <text evidence="2">Binds 1 zinc ion per subunit.</text>
</comment>
<comment type="subunit">
    <text evidence="1">Tetramer of two catalytic chains and two glycosylated inactive chains.</text>
</comment>
<comment type="subcellular location">
    <subcellularLocation>
        <location evidence="1">Secreted</location>
        <location evidence="1">Extracellular space</location>
    </subcellularLocation>
</comment>
<comment type="tissue specificity">
    <text evidence="7">Plasma. Expressed in liver.</text>
</comment>
<comment type="similarity">
    <text evidence="8">Belongs to the peptidase M14 family.</text>
</comment>
<name>CBPN_RAT</name>
<feature type="signal peptide" evidence="4">
    <location>
        <begin position="1"/>
        <end position="23"/>
    </location>
</feature>
<feature type="chain" id="PRO_0000042579" description="Carboxypeptidase N catalytic chain">
    <location>
        <begin position="24"/>
        <end position="457"/>
    </location>
</feature>
<feature type="domain" description="Peptidase M14" evidence="5">
    <location>
        <begin position="24"/>
        <end position="338"/>
    </location>
</feature>
<feature type="region of interest" description="Disordered" evidence="6">
    <location>
        <begin position="418"/>
        <end position="457"/>
    </location>
</feature>
<feature type="active site" description="Proton donor/acceptor" evidence="5">
    <location>
        <position position="308"/>
    </location>
</feature>
<feature type="binding site" evidence="5">
    <location>
        <position position="86"/>
    </location>
    <ligand>
        <name>Zn(2+)</name>
        <dbReference type="ChEBI" id="CHEBI:29105"/>
        <note>catalytic</note>
    </ligand>
</feature>
<feature type="binding site" evidence="5">
    <location>
        <position position="89"/>
    </location>
    <ligand>
        <name>Zn(2+)</name>
        <dbReference type="ChEBI" id="CHEBI:29105"/>
        <note>catalytic</note>
    </ligand>
</feature>
<feature type="binding site" evidence="5">
    <location>
        <position position="216"/>
    </location>
    <ligand>
        <name>Zn(2+)</name>
        <dbReference type="ChEBI" id="CHEBI:29105"/>
        <note>catalytic</note>
    </ligand>
</feature>
<feature type="glycosylation site" description="O-linked (GalNAc...) threonine" evidence="1">
    <location>
        <position position="400"/>
    </location>
</feature>
<feature type="glycosylation site" description="O-linked (GalNAc...) threonine" evidence="1">
    <location>
        <position position="402"/>
    </location>
</feature>
<feature type="glycosylation site" description="O-linked (GalNAc...) threonine" evidence="1">
    <location>
        <position position="409"/>
    </location>
</feature>
<feature type="disulfide bond" evidence="1">
    <location>
        <begin position="42"/>
        <end position="104"/>
    </location>
</feature>
<feature type="disulfide bond" evidence="3">
    <location>
        <begin position="271"/>
        <end position="311"/>
    </location>
</feature>
<proteinExistence type="evidence at transcript level"/>
<keyword id="KW-0121">Carboxypeptidase</keyword>
<keyword id="KW-1015">Disulfide bond</keyword>
<keyword id="KW-0325">Glycoprotein</keyword>
<keyword id="KW-0378">Hydrolase</keyword>
<keyword id="KW-0479">Metal-binding</keyword>
<keyword id="KW-0482">Metalloprotease</keyword>
<keyword id="KW-0645">Protease</keyword>
<keyword id="KW-1185">Reference proteome</keyword>
<keyword id="KW-0964">Secreted</keyword>
<keyword id="KW-0732">Signal</keyword>
<keyword id="KW-0862">Zinc</keyword>
<accession>Q9EQV8</accession>
<protein>
    <recommendedName>
        <fullName>Carboxypeptidase N catalytic chain</fullName>
        <shortName>CPN</shortName>
        <ecNumber>3.4.17.3</ecNumber>
    </recommendedName>
    <alternativeName>
        <fullName>Carboxypeptidase N polypeptide 1</fullName>
    </alternativeName>
    <alternativeName>
        <fullName>Carboxypeptidase N small subunit</fullName>
    </alternativeName>
</protein>
<reference key="1">
    <citation type="journal article" date="2000" name="Microbiol. Immunol.">
        <title>Molecular cloning and partial characterization of rat procarboxypeptidase R and carboxypeptidase N.</title>
        <authorList>
            <person name="Kato T."/>
            <person name="Sato T."/>
            <person name="Matsuo S."/>
            <person name="Yamamoto T."/>
            <person name="Campbell W."/>
            <person name="Hotta N."/>
            <person name="Okada N."/>
            <person name="Okada H."/>
        </authorList>
    </citation>
    <scope>NUCLEOTIDE SEQUENCE [MRNA]</scope>
    <scope>TISSUE SPECIFICITY</scope>
</reference>
<reference key="2">
    <citation type="journal article" date="2004" name="Genome Res.">
        <title>The status, quality, and expansion of the NIH full-length cDNA project: the Mammalian Gene Collection (MGC).</title>
        <authorList>
            <consortium name="The MGC Project Team"/>
        </authorList>
    </citation>
    <scope>NUCLEOTIDE SEQUENCE [LARGE SCALE MRNA]</scope>
    <source>
        <tissue>Liver</tissue>
    </source>
</reference>
<sequence length="457" mass="51981">MPDLPSAFLPLLLLSKFVTPVTFRHHRYDDLVRTLYKVHNQCPDITRLYNIGRSVKGRYLYVLEFSDYPGTHEPLEPEVKYVGNMHGNEVLGRELLLQLSEFLCEEFRNRNQRILRLIQDTRIHILPSMNPDGYEVAAAQGPNTSGYLVGRNNANGVDLNRNFPDLNTYFYYNSKYGGPNHHLPLPDNWKSQVEPETRAVIQWIRSLNFVLSANMHGGAVVANYPYDKSLEHRFRSPHRTSNSPTPDDELFQTLAKVYSYAHGWMHQGWNCGDYFPDGITNGASWYSLSKGMQDFNYLHTNCFEITLELSCNKFPRQEELQREWLGNREALIQFLEQVHQGIKGMVLDENYNNLTGAVISVTGINHDVTSGEHGDYFRLLLPGTYSVTAKASGYEPKTVTVTVGPAGPTLVDFQLKRSTTQVHPVQKAPGRGQGSRAKQPRTSRKKDQAAKRHRGPA</sequence>